<organism>
    <name type="scientific">Mycosarcoma maydis</name>
    <name type="common">Corn smut fungus</name>
    <name type="synonym">Ustilago maydis</name>
    <dbReference type="NCBI Taxonomy" id="5270"/>
    <lineage>
        <taxon>Eukaryota</taxon>
        <taxon>Fungi</taxon>
        <taxon>Dikarya</taxon>
        <taxon>Basidiomycota</taxon>
        <taxon>Ustilaginomycotina</taxon>
        <taxon>Ustilaginomycetes</taxon>
        <taxon>Ustilaginales</taxon>
        <taxon>Ustilaginaceae</taxon>
        <taxon>Mycosarcoma</taxon>
    </lineage>
</organism>
<comment type="function">
    <text evidence="1">Component of the coat protein complex II (COPII) which promotes the formation of transport vesicles from the endoplasmic reticulum (ER). The coat has two main functions, the physical deformation of the endoplasmic reticulum membrane into vesicles and the selection of cargo molecules. It also functions as a component of the nuclear pore complex (NPC). NPC components, collectively referred to as nucleoporins (NUPs), can play the role of both NPC structural components and of docking or interaction partners for transiently associated nuclear transport factors. SEC13 is required for efficient mRNA export from the nucleus to the cytoplasm and for correct nuclear pore biogenesis and distribution (By similarity).</text>
</comment>
<comment type="subunit">
    <text evidence="2">The COPII coat is composed of at least 5 proteins: the SEC23/24 complex, the SEC13/31 complex, and the protein SAR1. Component of the nuclear pore complex (NPC). NPC constitutes the exclusive means of nucleocytoplasmic transport. NPCs allow the passive diffusion of ions and small molecules and the active, nuclear transport receptor-mediated bidirectional transport of macromolecules such as proteins, RNAs, ribonucleoparticles (RNPs), and ribosomal subunits across the nuclear envelope. Due to its 8-fold rotational symmetry, all subunits are present with 8 copies or multiples thereof.</text>
</comment>
<comment type="subcellular location">
    <subcellularLocation>
        <location evidence="1">Cytoplasmic vesicle</location>
        <location evidence="1">COPII-coated vesicle membrane</location>
        <topology evidence="1">Peripheral membrane protein</topology>
        <orientation evidence="1">Cytoplasmic side</orientation>
    </subcellularLocation>
    <subcellularLocation>
        <location evidence="1">Endoplasmic reticulum membrane</location>
        <topology evidence="1">Peripheral membrane protein</topology>
        <orientation evidence="1">Cytoplasmic side</orientation>
    </subcellularLocation>
    <subcellularLocation>
        <location evidence="2">Nucleus</location>
        <location evidence="2">Nuclear pore complex</location>
    </subcellularLocation>
</comment>
<comment type="similarity">
    <text evidence="4">Belongs to the WD repeat SEC13 family.</text>
</comment>
<name>SEC13_MYCMD</name>
<keyword id="KW-0968">Cytoplasmic vesicle</keyword>
<keyword id="KW-0256">Endoplasmic reticulum</keyword>
<keyword id="KW-0931">ER-Golgi transport</keyword>
<keyword id="KW-0472">Membrane</keyword>
<keyword id="KW-0509">mRNA transport</keyword>
<keyword id="KW-0906">Nuclear pore complex</keyword>
<keyword id="KW-0539">Nucleus</keyword>
<keyword id="KW-0653">Protein transport</keyword>
<keyword id="KW-1185">Reference proteome</keyword>
<keyword id="KW-0677">Repeat</keyword>
<keyword id="KW-0811">Translocation</keyword>
<keyword id="KW-0813">Transport</keyword>
<keyword id="KW-0853">WD repeat</keyword>
<proteinExistence type="inferred from homology"/>
<feature type="chain" id="PRO_0000295424" description="Protein transport protein SEC13">
    <location>
        <begin position="1"/>
        <end position="364"/>
    </location>
</feature>
<feature type="repeat" description="WD 1">
    <location>
        <begin position="24"/>
        <end position="63"/>
    </location>
</feature>
<feature type="repeat" description="WD 2">
    <location>
        <begin position="69"/>
        <end position="110"/>
    </location>
</feature>
<feature type="repeat" description="WD 3">
    <location>
        <begin position="139"/>
        <end position="180"/>
    </location>
</feature>
<feature type="repeat" description="WD 4">
    <location>
        <begin position="185"/>
        <end position="250"/>
    </location>
</feature>
<feature type="repeat" description="WD 5">
    <location>
        <begin position="257"/>
        <end position="300"/>
    </location>
</feature>
<feature type="repeat" description="WD 6">
    <location>
        <begin position="319"/>
        <end position="358"/>
    </location>
</feature>
<feature type="region of interest" description="Disordered" evidence="3">
    <location>
        <begin position="1"/>
        <end position="24"/>
    </location>
</feature>
<feature type="compositionally biased region" description="Polar residues" evidence="3">
    <location>
        <begin position="1"/>
        <end position="11"/>
    </location>
</feature>
<evidence type="ECO:0000250" key="1"/>
<evidence type="ECO:0000250" key="2">
    <source>
        <dbReference type="UniProtKB" id="Q04491"/>
    </source>
</evidence>
<evidence type="ECO:0000256" key="3">
    <source>
        <dbReference type="SAM" id="MobiDB-lite"/>
    </source>
</evidence>
<evidence type="ECO:0000305" key="4"/>
<gene>
    <name type="primary">SEC13</name>
    <name type="ORF">UMAG_02245</name>
</gene>
<accession>Q4PCB8</accession>
<accession>A0A0D1E5R0</accession>
<protein>
    <recommendedName>
        <fullName>Protein transport protein SEC13</fullName>
    </recommendedName>
</protein>
<sequence>MTTVTSSSAGLSLSAERPKNIETQHEDMVHDAQLDFYGKRLATCSSDRTVKVFDIVNGTPSTTAETLHGHQGPVWQVAWAHPTFGDILASCSYDGKVVIWKDNGAGASIGASAPYGSQSAYGAPTSSAGGWTKIKEHTLHTASVNSISWAPHELGSILACASSDGNVSVLTFNNDGTWAVDLVAAHPVGCNAVSWAPAVVPGSLISAQSVGANAGAASNGEAKLVKRFASAGCDNTVKIWEFSQEANRFVEVEALQGHSDWVRDVAFAPNVGLPRSYLATASQDRTVLIWTQDSPTAAWSKTALNPISASAAAGAGSNKFPDTVWRVSWSVSGNVLAVSCGDGKITLWKENLKGAWECVSEMDS</sequence>
<dbReference type="EMBL" id="CM003144">
    <property type="protein sequence ID" value="KIS69720.1"/>
    <property type="molecule type" value="Genomic_DNA"/>
</dbReference>
<dbReference type="RefSeq" id="XP_011388583.1">
    <property type="nucleotide sequence ID" value="XM_011390281.1"/>
</dbReference>
<dbReference type="SMR" id="Q4PCB8"/>
<dbReference type="FunCoup" id="Q4PCB8">
    <property type="interactions" value="618"/>
</dbReference>
<dbReference type="STRING" id="237631.Q4PCB8"/>
<dbReference type="EnsemblFungi" id="KIS69720">
    <property type="protein sequence ID" value="KIS69720"/>
    <property type="gene ID" value="UMAG_02245"/>
</dbReference>
<dbReference type="GeneID" id="23563042"/>
<dbReference type="KEGG" id="uma:UMAG_02245"/>
<dbReference type="VEuPathDB" id="FungiDB:UMAG_02245"/>
<dbReference type="eggNOG" id="KOG1332">
    <property type="taxonomic scope" value="Eukaryota"/>
</dbReference>
<dbReference type="HOGENOM" id="CLU_032441_0_0_1"/>
<dbReference type="InParanoid" id="Q4PCB8"/>
<dbReference type="OMA" id="IWKEEGD"/>
<dbReference type="OrthoDB" id="364224at2759"/>
<dbReference type="Proteomes" id="UP000000561">
    <property type="component" value="Chromosome 5"/>
</dbReference>
<dbReference type="GO" id="GO:0030127">
    <property type="term" value="C:COPII vesicle coat"/>
    <property type="evidence" value="ECO:0000318"/>
    <property type="project" value="GO_Central"/>
</dbReference>
<dbReference type="GO" id="GO:0005789">
    <property type="term" value="C:endoplasmic reticulum membrane"/>
    <property type="evidence" value="ECO:0007669"/>
    <property type="project" value="UniProtKB-SubCell"/>
</dbReference>
<dbReference type="GO" id="GO:0031080">
    <property type="term" value="C:nuclear pore outer ring"/>
    <property type="evidence" value="ECO:0000318"/>
    <property type="project" value="GO_Central"/>
</dbReference>
<dbReference type="GO" id="GO:0005198">
    <property type="term" value="F:structural molecule activity"/>
    <property type="evidence" value="ECO:0000318"/>
    <property type="project" value="GO_Central"/>
</dbReference>
<dbReference type="GO" id="GO:0090114">
    <property type="term" value="P:COPII-coated vesicle budding"/>
    <property type="evidence" value="ECO:0000318"/>
    <property type="project" value="GO_Central"/>
</dbReference>
<dbReference type="GO" id="GO:0051028">
    <property type="term" value="P:mRNA transport"/>
    <property type="evidence" value="ECO:0007669"/>
    <property type="project" value="UniProtKB-KW"/>
</dbReference>
<dbReference type="GO" id="GO:0032008">
    <property type="term" value="P:positive regulation of TOR signaling"/>
    <property type="evidence" value="ECO:0000318"/>
    <property type="project" value="GO_Central"/>
</dbReference>
<dbReference type="GO" id="GO:0032527">
    <property type="term" value="P:protein exit from endoplasmic reticulum"/>
    <property type="evidence" value="ECO:0000318"/>
    <property type="project" value="GO_Central"/>
</dbReference>
<dbReference type="GO" id="GO:0006606">
    <property type="term" value="P:protein import into nucleus"/>
    <property type="evidence" value="ECO:0000318"/>
    <property type="project" value="GO_Central"/>
</dbReference>
<dbReference type="FunFam" id="2.130.10.10:FF:000904">
    <property type="entry name" value="Probable SEC13-protein transport protein"/>
    <property type="match status" value="1"/>
</dbReference>
<dbReference type="Gene3D" id="2.130.10.10">
    <property type="entry name" value="YVTN repeat-like/Quinoprotein amine dehydrogenase"/>
    <property type="match status" value="1"/>
</dbReference>
<dbReference type="InterPro" id="IPR037363">
    <property type="entry name" value="Sec13/Seh1_fam"/>
</dbReference>
<dbReference type="InterPro" id="IPR015943">
    <property type="entry name" value="WD40/YVTN_repeat-like_dom_sf"/>
</dbReference>
<dbReference type="InterPro" id="IPR036322">
    <property type="entry name" value="WD40_repeat_dom_sf"/>
</dbReference>
<dbReference type="InterPro" id="IPR001680">
    <property type="entry name" value="WD40_rpt"/>
</dbReference>
<dbReference type="PANTHER" id="PTHR11024">
    <property type="entry name" value="NUCLEAR PORE COMPLEX PROTEIN SEC13 / SEH1 FAMILY MEMBER"/>
    <property type="match status" value="1"/>
</dbReference>
<dbReference type="PANTHER" id="PTHR11024:SF2">
    <property type="entry name" value="PROTEIN SEC13 HOMOLOG"/>
    <property type="match status" value="1"/>
</dbReference>
<dbReference type="Pfam" id="PF00400">
    <property type="entry name" value="WD40"/>
    <property type="match status" value="5"/>
</dbReference>
<dbReference type="SMART" id="SM00320">
    <property type="entry name" value="WD40"/>
    <property type="match status" value="6"/>
</dbReference>
<dbReference type="SUPFAM" id="SSF50978">
    <property type="entry name" value="WD40 repeat-like"/>
    <property type="match status" value="1"/>
</dbReference>
<dbReference type="PROSITE" id="PS50082">
    <property type="entry name" value="WD_REPEATS_2"/>
    <property type="match status" value="3"/>
</dbReference>
<dbReference type="PROSITE" id="PS50294">
    <property type="entry name" value="WD_REPEATS_REGION"/>
    <property type="match status" value="1"/>
</dbReference>
<reference key="1">
    <citation type="journal article" date="2006" name="Nature">
        <title>Insights from the genome of the biotrophic fungal plant pathogen Ustilago maydis.</title>
        <authorList>
            <person name="Kaemper J."/>
            <person name="Kahmann R."/>
            <person name="Boelker M."/>
            <person name="Ma L.-J."/>
            <person name="Brefort T."/>
            <person name="Saville B.J."/>
            <person name="Banuett F."/>
            <person name="Kronstad J.W."/>
            <person name="Gold S.E."/>
            <person name="Mueller O."/>
            <person name="Perlin M.H."/>
            <person name="Woesten H.A.B."/>
            <person name="de Vries R."/>
            <person name="Ruiz-Herrera J."/>
            <person name="Reynaga-Pena C.G."/>
            <person name="Snetselaar K."/>
            <person name="McCann M."/>
            <person name="Perez-Martin J."/>
            <person name="Feldbruegge M."/>
            <person name="Basse C.W."/>
            <person name="Steinberg G."/>
            <person name="Ibeas J.I."/>
            <person name="Holloman W."/>
            <person name="Guzman P."/>
            <person name="Farman M.L."/>
            <person name="Stajich J.E."/>
            <person name="Sentandreu R."/>
            <person name="Gonzalez-Prieto J.M."/>
            <person name="Kennell J.C."/>
            <person name="Molina L."/>
            <person name="Schirawski J."/>
            <person name="Mendoza-Mendoza A."/>
            <person name="Greilinger D."/>
            <person name="Muench K."/>
            <person name="Roessel N."/>
            <person name="Scherer M."/>
            <person name="Vranes M."/>
            <person name="Ladendorf O."/>
            <person name="Vincon V."/>
            <person name="Fuchs U."/>
            <person name="Sandrock B."/>
            <person name="Meng S."/>
            <person name="Ho E.C.H."/>
            <person name="Cahill M.J."/>
            <person name="Boyce K.J."/>
            <person name="Klose J."/>
            <person name="Klosterman S.J."/>
            <person name="Deelstra H.J."/>
            <person name="Ortiz-Castellanos L."/>
            <person name="Li W."/>
            <person name="Sanchez-Alonso P."/>
            <person name="Schreier P.H."/>
            <person name="Haeuser-Hahn I."/>
            <person name="Vaupel M."/>
            <person name="Koopmann E."/>
            <person name="Friedrich G."/>
            <person name="Voss H."/>
            <person name="Schlueter T."/>
            <person name="Margolis J."/>
            <person name="Platt D."/>
            <person name="Swimmer C."/>
            <person name="Gnirke A."/>
            <person name="Chen F."/>
            <person name="Vysotskaia V."/>
            <person name="Mannhaupt G."/>
            <person name="Gueldener U."/>
            <person name="Muensterkoetter M."/>
            <person name="Haase D."/>
            <person name="Oesterheld M."/>
            <person name="Mewes H.-W."/>
            <person name="Mauceli E.W."/>
            <person name="DeCaprio D."/>
            <person name="Wade C.M."/>
            <person name="Butler J."/>
            <person name="Young S.K."/>
            <person name="Jaffe D.B."/>
            <person name="Calvo S.E."/>
            <person name="Nusbaum C."/>
            <person name="Galagan J.E."/>
            <person name="Birren B.W."/>
        </authorList>
    </citation>
    <scope>NUCLEOTIDE SEQUENCE [LARGE SCALE GENOMIC DNA]</scope>
    <source>
        <strain>DSM 14603 / FGSC 9021 / UM521</strain>
    </source>
</reference>
<reference key="2">
    <citation type="submission" date="2014-09" db="EMBL/GenBank/DDBJ databases">
        <authorList>
            <person name="Gueldener U."/>
            <person name="Muensterkoetter M."/>
            <person name="Walter M.C."/>
            <person name="Mannhaupt G."/>
            <person name="Kahmann R."/>
        </authorList>
    </citation>
    <scope>GENOME REANNOTATION</scope>
    <source>
        <strain>DSM 14603 / FGSC 9021 / UM521</strain>
    </source>
</reference>